<name>RHO_MYCTU</name>
<gene>
    <name evidence="1" type="primary">rho</name>
    <name type="ordered locus">Rv1297</name>
    <name type="ORF">MTCY373.17</name>
</gene>
<proteinExistence type="evidence at protein level"/>
<accession>P9WHF3</accession>
<accession>L0T8Z1</accession>
<accession>P66028</accession>
<accession>Q10607</accession>
<dbReference type="EC" id="3.6.4.-" evidence="1"/>
<dbReference type="EMBL" id="AL123456">
    <property type="protein sequence ID" value="CCP44054.1"/>
    <property type="molecule type" value="Genomic_DNA"/>
</dbReference>
<dbReference type="PIR" id="E70773">
    <property type="entry name" value="E70773"/>
</dbReference>
<dbReference type="RefSeq" id="NP_215813.1">
    <property type="nucleotide sequence ID" value="NC_000962.3"/>
</dbReference>
<dbReference type="RefSeq" id="WP_003898814.1">
    <property type="nucleotide sequence ID" value="NZ_NVQJ01000030.1"/>
</dbReference>
<dbReference type="PDB" id="7OQH">
    <property type="method" value="EM"/>
    <property type="resolution" value="3.32 A"/>
    <property type="chains" value="A/B/C/D/E/F=1-602"/>
</dbReference>
<dbReference type="PDBsum" id="7OQH"/>
<dbReference type="SMR" id="P9WHF3"/>
<dbReference type="FunCoup" id="P9WHF3">
    <property type="interactions" value="51"/>
</dbReference>
<dbReference type="STRING" id="83332.Rv1297"/>
<dbReference type="PaxDb" id="83332-Rv1297"/>
<dbReference type="DNASU" id="886952"/>
<dbReference type="GeneID" id="45425271"/>
<dbReference type="GeneID" id="886952"/>
<dbReference type="KEGG" id="mtu:Rv1297"/>
<dbReference type="KEGG" id="mtv:RVBD_1297"/>
<dbReference type="TubercuList" id="Rv1297"/>
<dbReference type="eggNOG" id="COG1158">
    <property type="taxonomic scope" value="Bacteria"/>
</dbReference>
<dbReference type="InParanoid" id="P9WHF3"/>
<dbReference type="OrthoDB" id="9805197at2"/>
<dbReference type="PhylomeDB" id="P9WHF3"/>
<dbReference type="SABIO-RK" id="P9WHF3"/>
<dbReference type="Proteomes" id="UP000001584">
    <property type="component" value="Chromosome"/>
</dbReference>
<dbReference type="GO" id="GO:0009274">
    <property type="term" value="C:peptidoglycan-based cell wall"/>
    <property type="evidence" value="ECO:0007005"/>
    <property type="project" value="MTBBASE"/>
</dbReference>
<dbReference type="GO" id="GO:0005886">
    <property type="term" value="C:plasma membrane"/>
    <property type="evidence" value="ECO:0007005"/>
    <property type="project" value="MTBBASE"/>
</dbReference>
<dbReference type="GO" id="GO:0005524">
    <property type="term" value="F:ATP binding"/>
    <property type="evidence" value="ECO:0007669"/>
    <property type="project" value="UniProtKB-UniRule"/>
</dbReference>
<dbReference type="GO" id="GO:0016887">
    <property type="term" value="F:ATP hydrolysis activity"/>
    <property type="evidence" value="ECO:0007669"/>
    <property type="project" value="InterPro"/>
</dbReference>
<dbReference type="GO" id="GO:0008186">
    <property type="term" value="F:ATP-dependent activity, acting on RNA"/>
    <property type="evidence" value="ECO:0007669"/>
    <property type="project" value="InterPro"/>
</dbReference>
<dbReference type="GO" id="GO:0004386">
    <property type="term" value="F:helicase activity"/>
    <property type="evidence" value="ECO:0007669"/>
    <property type="project" value="UniProtKB-UniRule"/>
</dbReference>
<dbReference type="GO" id="GO:0003723">
    <property type="term" value="F:RNA binding"/>
    <property type="evidence" value="ECO:0007669"/>
    <property type="project" value="UniProtKB-UniRule"/>
</dbReference>
<dbReference type="GO" id="GO:0006353">
    <property type="term" value="P:DNA-templated transcription termination"/>
    <property type="evidence" value="ECO:0000318"/>
    <property type="project" value="GO_Central"/>
</dbReference>
<dbReference type="GO" id="GO:0006363">
    <property type="term" value="P:termination of RNA polymerase I transcription"/>
    <property type="evidence" value="ECO:0000314"/>
    <property type="project" value="MTBBASE"/>
</dbReference>
<dbReference type="CDD" id="cd01128">
    <property type="entry name" value="rho_factor_C"/>
    <property type="match status" value="1"/>
</dbReference>
<dbReference type="FunFam" id="2.40.50.140:FF:000316">
    <property type="entry name" value="Transcription termination factor Rho"/>
    <property type="match status" value="1"/>
</dbReference>
<dbReference type="FunFam" id="3.40.50.300:FF:000072">
    <property type="entry name" value="Transcription termination factor Rho"/>
    <property type="match status" value="1"/>
</dbReference>
<dbReference type="Gene3D" id="2.40.50.140">
    <property type="entry name" value="Nucleic acid-binding proteins"/>
    <property type="match status" value="1"/>
</dbReference>
<dbReference type="Gene3D" id="3.40.50.300">
    <property type="entry name" value="P-loop containing nucleotide triphosphate hydrolases"/>
    <property type="match status" value="1"/>
</dbReference>
<dbReference type="HAMAP" id="MF_01884">
    <property type="entry name" value="Rho"/>
    <property type="match status" value="1"/>
</dbReference>
<dbReference type="InterPro" id="IPR003593">
    <property type="entry name" value="AAA+_ATPase"/>
</dbReference>
<dbReference type="InterPro" id="IPR000194">
    <property type="entry name" value="ATPase_F1/V1/A1_a/bsu_nucl-bd"/>
</dbReference>
<dbReference type="InterPro" id="IPR011129">
    <property type="entry name" value="CSD"/>
</dbReference>
<dbReference type="InterPro" id="IPR012340">
    <property type="entry name" value="NA-bd_OB-fold"/>
</dbReference>
<dbReference type="InterPro" id="IPR027417">
    <property type="entry name" value="P-loop_NTPase"/>
</dbReference>
<dbReference type="InterPro" id="IPR011112">
    <property type="entry name" value="Rho-like_N"/>
</dbReference>
<dbReference type="InterPro" id="IPR041703">
    <property type="entry name" value="Rho_factor_ATP-bd"/>
</dbReference>
<dbReference type="InterPro" id="IPR036269">
    <property type="entry name" value="Rho_N_sf"/>
</dbReference>
<dbReference type="InterPro" id="IPR011113">
    <property type="entry name" value="Rho_RNA-bd"/>
</dbReference>
<dbReference type="InterPro" id="IPR004665">
    <property type="entry name" value="Term_rho"/>
</dbReference>
<dbReference type="NCBIfam" id="NF006886">
    <property type="entry name" value="PRK09376.1"/>
    <property type="match status" value="1"/>
</dbReference>
<dbReference type="NCBIfam" id="TIGR00767">
    <property type="entry name" value="rho"/>
    <property type="match status" value="1"/>
</dbReference>
<dbReference type="PANTHER" id="PTHR46425">
    <property type="entry name" value="TRANSCRIPTION TERMINATION FACTOR RHO"/>
    <property type="match status" value="1"/>
</dbReference>
<dbReference type="PANTHER" id="PTHR46425:SF1">
    <property type="entry name" value="TRANSCRIPTION TERMINATION FACTOR RHO"/>
    <property type="match status" value="1"/>
</dbReference>
<dbReference type="Pfam" id="PF00006">
    <property type="entry name" value="ATP-synt_ab"/>
    <property type="match status" value="1"/>
</dbReference>
<dbReference type="Pfam" id="PF07498">
    <property type="entry name" value="Rho_N"/>
    <property type="match status" value="1"/>
</dbReference>
<dbReference type="Pfam" id="PF07497">
    <property type="entry name" value="Rho_RNA_bind"/>
    <property type="match status" value="1"/>
</dbReference>
<dbReference type="SMART" id="SM00382">
    <property type="entry name" value="AAA"/>
    <property type="match status" value="1"/>
</dbReference>
<dbReference type="SMART" id="SM00357">
    <property type="entry name" value="CSP"/>
    <property type="match status" value="1"/>
</dbReference>
<dbReference type="SMART" id="SM00959">
    <property type="entry name" value="Rho_N"/>
    <property type="match status" value="1"/>
</dbReference>
<dbReference type="SUPFAM" id="SSF50249">
    <property type="entry name" value="Nucleic acid-binding proteins"/>
    <property type="match status" value="1"/>
</dbReference>
<dbReference type="SUPFAM" id="SSF52540">
    <property type="entry name" value="P-loop containing nucleoside triphosphate hydrolases"/>
    <property type="match status" value="1"/>
</dbReference>
<dbReference type="SUPFAM" id="SSF68912">
    <property type="entry name" value="Rho N-terminal domain-like"/>
    <property type="match status" value="1"/>
</dbReference>
<dbReference type="PROSITE" id="PS51856">
    <property type="entry name" value="RHO_RNA_BD"/>
    <property type="match status" value="1"/>
</dbReference>
<feature type="chain" id="PRO_0000188970" description="Transcription termination factor Rho">
    <location>
        <begin position="1"/>
        <end position="602"/>
    </location>
</feature>
<feature type="domain" description="Rho RNA-BD" evidence="2">
    <location>
        <begin position="223"/>
        <end position="301"/>
    </location>
</feature>
<feature type="region of interest" description="Disordered" evidence="3">
    <location>
        <begin position="1"/>
        <end position="35"/>
    </location>
</feature>
<feature type="region of interest" description="Disordered" evidence="3">
    <location>
        <begin position="76"/>
        <end position="216"/>
    </location>
</feature>
<feature type="compositionally biased region" description="Basic and acidic residues" evidence="3">
    <location>
        <begin position="85"/>
        <end position="96"/>
    </location>
</feature>
<feature type="compositionally biased region" description="Polar residues" evidence="3">
    <location>
        <begin position="100"/>
        <end position="120"/>
    </location>
</feature>
<feature type="compositionally biased region" description="Low complexity" evidence="3">
    <location>
        <begin position="172"/>
        <end position="182"/>
    </location>
</feature>
<feature type="compositionally biased region" description="Basic and acidic residues" evidence="3">
    <location>
        <begin position="183"/>
        <end position="192"/>
    </location>
</feature>
<feature type="compositionally biased region" description="Basic residues" evidence="3">
    <location>
        <begin position="193"/>
        <end position="206"/>
    </location>
</feature>
<feature type="binding site" evidence="1">
    <location>
        <begin position="344"/>
        <end position="349"/>
    </location>
    <ligand>
        <name>ATP</name>
        <dbReference type="ChEBI" id="CHEBI:30616"/>
    </ligand>
</feature>
<feature type="binding site" evidence="1">
    <location>
        <begin position="356"/>
        <end position="361"/>
    </location>
    <ligand>
        <name>ATP</name>
        <dbReference type="ChEBI" id="CHEBI:30616"/>
    </ligand>
</feature>
<feature type="binding site" evidence="1">
    <location>
        <position position="387"/>
    </location>
    <ligand>
        <name>ATP</name>
        <dbReference type="ChEBI" id="CHEBI:30616"/>
    </ligand>
</feature>
<feature type="strand" evidence="5">
    <location>
        <begin position="227"/>
        <end position="231"/>
    </location>
</feature>
<feature type="strand" evidence="5">
    <location>
        <begin position="233"/>
        <end position="235"/>
    </location>
</feature>
<feature type="strand" evidence="5">
    <location>
        <begin position="237"/>
        <end position="239"/>
    </location>
</feature>
<feature type="turn" evidence="5">
    <location>
        <begin position="241"/>
        <end position="244"/>
    </location>
</feature>
<feature type="strand" evidence="5">
    <location>
        <begin position="251"/>
        <end position="253"/>
    </location>
</feature>
<feature type="helix" evidence="5">
    <location>
        <begin position="255"/>
        <end position="261"/>
    </location>
</feature>
<feature type="turn" evidence="5">
    <location>
        <begin position="310"/>
        <end position="312"/>
    </location>
</feature>
<feature type="strand" evidence="5">
    <location>
        <begin position="328"/>
        <end position="330"/>
    </location>
</feature>
<feature type="helix" evidence="5">
    <location>
        <begin position="332"/>
        <end position="340"/>
    </location>
</feature>
<feature type="strand" evidence="5">
    <location>
        <begin position="348"/>
        <end position="353"/>
    </location>
</feature>
<feature type="strand" evidence="5">
    <location>
        <begin position="355"/>
        <end position="358"/>
    </location>
</feature>
<feature type="helix" evidence="5">
    <location>
        <begin position="359"/>
        <end position="373"/>
    </location>
</feature>
<feature type="strand" evidence="5">
    <location>
        <begin position="378"/>
        <end position="382"/>
    </location>
</feature>
<feature type="strand" evidence="5">
    <location>
        <begin position="384"/>
        <end position="386"/>
    </location>
</feature>
<feature type="helix" evidence="5">
    <location>
        <begin position="388"/>
        <end position="397"/>
    </location>
</feature>
<feature type="strand" evidence="5">
    <location>
        <begin position="400"/>
        <end position="403"/>
    </location>
</feature>
<feature type="helix" evidence="5">
    <location>
        <begin position="411"/>
        <end position="431"/>
    </location>
</feature>
<feature type="strand" evidence="5">
    <location>
        <begin position="435"/>
        <end position="440"/>
    </location>
</feature>
<feature type="helix" evidence="5">
    <location>
        <begin position="442"/>
        <end position="452"/>
    </location>
</feature>
<feature type="turn" evidence="5">
    <location>
        <begin position="460"/>
        <end position="463"/>
    </location>
</feature>
<feature type="helix" evidence="5">
    <location>
        <begin position="467"/>
        <end position="469"/>
    </location>
</feature>
<feature type="helix" evidence="5">
    <location>
        <begin position="470"/>
        <end position="477"/>
    </location>
</feature>
<feature type="strand" evidence="5">
    <location>
        <begin position="483"/>
        <end position="485"/>
    </location>
</feature>
<feature type="strand" evidence="5">
    <location>
        <begin position="487"/>
        <end position="495"/>
    </location>
</feature>
<feature type="strand" evidence="5">
    <location>
        <begin position="497"/>
        <end position="499"/>
    </location>
</feature>
<feature type="helix" evidence="5">
    <location>
        <begin position="501"/>
        <end position="508"/>
    </location>
</feature>
<feature type="turn" evidence="5">
    <location>
        <begin position="509"/>
        <end position="512"/>
    </location>
</feature>
<feature type="strand" evidence="5">
    <location>
        <begin position="515"/>
        <end position="520"/>
    </location>
</feature>
<feature type="helix" evidence="5">
    <location>
        <begin position="523"/>
        <end position="526"/>
    </location>
</feature>
<feature type="strand" evidence="5">
    <location>
        <begin position="533"/>
        <end position="539"/>
    </location>
</feature>
<feature type="helix" evidence="5">
    <location>
        <begin position="543"/>
        <end position="545"/>
    </location>
</feature>
<feature type="helix" evidence="5">
    <location>
        <begin position="549"/>
        <end position="564"/>
    </location>
</feature>
<feature type="helix" evidence="5">
    <location>
        <begin position="567"/>
        <end position="574"/>
    </location>
</feature>
<feature type="turn" evidence="5">
    <location>
        <begin position="575"/>
        <end position="579"/>
    </location>
</feature>
<feature type="helix" evidence="5">
    <location>
        <begin position="583"/>
        <end position="591"/>
    </location>
</feature>
<keyword id="KW-0002">3D-structure</keyword>
<keyword id="KW-0067">ATP-binding</keyword>
<keyword id="KW-0347">Helicase</keyword>
<keyword id="KW-0378">Hydrolase</keyword>
<keyword id="KW-0547">Nucleotide-binding</keyword>
<keyword id="KW-1185">Reference proteome</keyword>
<keyword id="KW-0694">RNA-binding</keyword>
<keyword id="KW-0804">Transcription</keyword>
<keyword id="KW-0805">Transcription regulation</keyword>
<keyword id="KW-0806">Transcription termination</keyword>
<comment type="function">
    <text evidence="1 4">Facilitates transcription termination by a mechanism that involves Rho binding to the nascent RNA, activation of Rho's RNA-dependent ATPase activity, and release of the mRNA from the DNA template. Shows poor RNA-dependent ATP hydrolysis and inefficient DNA-RNA unwinding activities, but exhibits robust and fast transcription termination, which suggests that the transcription termination function of M.tuberculosis Rho is not correlated with its helicase/translocase activities and that these functions may not be important for its RNA release process.</text>
</comment>
<comment type="activity regulation">
    <text evidence="4">The antibiotic bicyclomycin inhibits ATPase activity but does not affect termination function.</text>
</comment>
<comment type="biophysicochemical properties">
    <kinetics>
        <KM evidence="4">70 uM for ATP</KM>
    </kinetics>
</comment>
<comment type="subunit">
    <text evidence="1 4">Homohexamer. The homohexamer assembles into an open ring structure. Does not bind NusG.</text>
</comment>
<comment type="domain">
    <text evidence="4">Contains an extra N-terminal domain, a S1-like RNA-binding domain and a conserved P-loop NTPase domain.</text>
</comment>
<comment type="miscellaneous">
    <text>Was identified as a high-confidence drug target.</text>
</comment>
<comment type="similarity">
    <text evidence="1">Belongs to the Rho family.</text>
</comment>
<reference key="1">
    <citation type="journal article" date="1998" name="Nature">
        <title>Deciphering the biology of Mycobacterium tuberculosis from the complete genome sequence.</title>
        <authorList>
            <person name="Cole S.T."/>
            <person name="Brosch R."/>
            <person name="Parkhill J."/>
            <person name="Garnier T."/>
            <person name="Churcher C.M."/>
            <person name="Harris D.E."/>
            <person name="Gordon S.V."/>
            <person name="Eiglmeier K."/>
            <person name="Gas S."/>
            <person name="Barry C.E. III"/>
            <person name="Tekaia F."/>
            <person name="Badcock K."/>
            <person name="Basham D."/>
            <person name="Brown D."/>
            <person name="Chillingworth T."/>
            <person name="Connor R."/>
            <person name="Davies R.M."/>
            <person name="Devlin K."/>
            <person name="Feltwell T."/>
            <person name="Gentles S."/>
            <person name="Hamlin N."/>
            <person name="Holroyd S."/>
            <person name="Hornsby T."/>
            <person name="Jagels K."/>
            <person name="Krogh A."/>
            <person name="McLean J."/>
            <person name="Moule S."/>
            <person name="Murphy L.D."/>
            <person name="Oliver S."/>
            <person name="Osborne J."/>
            <person name="Quail M.A."/>
            <person name="Rajandream M.A."/>
            <person name="Rogers J."/>
            <person name="Rutter S."/>
            <person name="Seeger K."/>
            <person name="Skelton S."/>
            <person name="Squares S."/>
            <person name="Squares R."/>
            <person name="Sulston J.E."/>
            <person name="Taylor K."/>
            <person name="Whitehead S."/>
            <person name="Barrell B.G."/>
        </authorList>
    </citation>
    <scope>NUCLEOTIDE SEQUENCE [LARGE SCALE GENOMIC DNA]</scope>
    <source>
        <strain>ATCC 25618 / H37Rv</strain>
    </source>
</reference>
<reference key="2">
    <citation type="journal article" date="2008" name="BMC Syst. Biol.">
        <title>targetTB: a target identification pipeline for Mycobacterium tuberculosis through an interactome, reactome and genome-scale structural analysis.</title>
        <authorList>
            <person name="Raman K."/>
            <person name="Yeturu K."/>
            <person name="Chandra N."/>
        </authorList>
    </citation>
    <scope>IDENTIFICATION AS A DRUG TARGET [LARGE SCALE ANALYSIS]</scope>
</reference>
<reference key="3">
    <citation type="journal article" date="2010" name="J. Mol. Biol.">
        <title>A bacterial transcription terminator with inefficient molecular motor action but with a robust transcription termination function.</title>
        <authorList>
            <person name="Kalarickal N.C."/>
            <person name="Ranjan A."/>
            <person name="Kalyani B.S."/>
            <person name="Wal M."/>
            <person name="Sen R."/>
        </authorList>
    </citation>
    <scope>FUNCTION</scope>
    <scope>ACTIVITY REGULATION</scope>
    <scope>BIOPHYSICOCHEMICAL PROPERTIES</scope>
    <scope>SUBUNIT</scope>
    <scope>DOMAIN</scope>
</reference>
<reference key="4">
    <citation type="journal article" date="2011" name="Mol. Cell. Proteomics">
        <title>Proteogenomic analysis of Mycobacterium tuberculosis by high resolution mass spectrometry.</title>
        <authorList>
            <person name="Kelkar D.S."/>
            <person name="Kumar D."/>
            <person name="Kumar P."/>
            <person name="Balakrishnan L."/>
            <person name="Muthusamy B."/>
            <person name="Yadav A.K."/>
            <person name="Shrivastava P."/>
            <person name="Marimuthu A."/>
            <person name="Anand S."/>
            <person name="Sundaram H."/>
            <person name="Kingsbury R."/>
            <person name="Harsha H.C."/>
            <person name="Nair B."/>
            <person name="Prasad T.S."/>
            <person name="Chauhan D.S."/>
            <person name="Katoch K."/>
            <person name="Katoch V.M."/>
            <person name="Kumar P."/>
            <person name="Chaerkady R."/>
            <person name="Ramachandran S."/>
            <person name="Dash D."/>
            <person name="Pandey A."/>
        </authorList>
    </citation>
    <scope>IDENTIFICATION BY MASS SPECTROMETRY [LARGE SCALE ANALYSIS]</scope>
    <source>
        <strain>ATCC 25618 / H37Rv</strain>
    </source>
</reference>
<protein>
    <recommendedName>
        <fullName evidence="1">Transcription termination factor Rho</fullName>
        <ecNumber evidence="1">3.6.4.-</ecNumber>
    </recommendedName>
    <alternativeName>
        <fullName evidence="1">ATP-dependent helicase Rho</fullName>
    </alternativeName>
</protein>
<evidence type="ECO:0000255" key="1">
    <source>
        <dbReference type="HAMAP-Rule" id="MF_01884"/>
    </source>
</evidence>
<evidence type="ECO:0000255" key="2">
    <source>
        <dbReference type="PROSITE-ProRule" id="PRU01203"/>
    </source>
</evidence>
<evidence type="ECO:0000256" key="3">
    <source>
        <dbReference type="SAM" id="MobiDB-lite"/>
    </source>
</evidence>
<evidence type="ECO:0000269" key="4">
    <source>
    </source>
</evidence>
<evidence type="ECO:0007829" key="5">
    <source>
        <dbReference type="PDB" id="7OQH"/>
    </source>
</evidence>
<sequence length="602" mass="65133">MTDTDLITAGESTDGKPSDAAATDPPDLNADEPAGSLATMVLPELRALANRAGVKGTSGMRKNELIAAIEEIRRQANGAPAVDRSAQEHDKGDRPPSSEAPATQGEQTPTEQIDSQSQQVRPERRSATREAGPSGSGERAGTAADDTDNRQGGQQDAKTEERGTDAGGDQGGDQQASGGQQARGDEDGEARQGRRGRRFRDRRRRGERSGDGAEAELREDDVVQPVAGILDVLDNYAFVRTSGYLPGPHDVYVSMNMVRKNGMRRGDAVTGAVRVPKEGEQPNQRQKFNPLVRLDSINGGSVEDAKKRPEFGKLTPLYPNQRLRLETSTERLTTRVIDLIMPIGKGQRALIVSPPKAGKTTILQDIANAITRNNPECHLMVVLVDERPEEVTDMQRSVKGEVIASTFDRPPSDHTSVAELAIERAKRLVEQGKDVVVLLDSITRLGRAYNNASPASGRILSGGVDSTALYPPKRFLGAARNIEEGGSLTIIATAMVETGSTGDTVIFEEFKGTGNAELKLDRKIAERRVFPAVDVNPSGTRKDELLLSPDEFAIVHKLRRVLSGLDSHQAIDLLMSQLRKTKNNYEFLVQVSKTTPGSMDSD</sequence>
<organism>
    <name type="scientific">Mycobacterium tuberculosis (strain ATCC 25618 / H37Rv)</name>
    <dbReference type="NCBI Taxonomy" id="83332"/>
    <lineage>
        <taxon>Bacteria</taxon>
        <taxon>Bacillati</taxon>
        <taxon>Actinomycetota</taxon>
        <taxon>Actinomycetes</taxon>
        <taxon>Mycobacteriales</taxon>
        <taxon>Mycobacteriaceae</taxon>
        <taxon>Mycobacterium</taxon>
        <taxon>Mycobacterium tuberculosis complex</taxon>
    </lineage>
</organism>